<dbReference type="EC" id="2.3.1.9"/>
<dbReference type="EMBL" id="AB120846">
    <property type="protein sequence ID" value="BAD20191.1"/>
    <property type="molecule type" value="Genomic_DNA"/>
</dbReference>
<dbReference type="EMBL" id="CR382131">
    <property type="protein sequence ID" value="CAG79399.1"/>
    <property type="molecule type" value="Genomic_DNA"/>
</dbReference>
<dbReference type="PIR" id="JC7675">
    <property type="entry name" value="JC7675"/>
</dbReference>
<dbReference type="RefSeq" id="XP_503808.1">
    <property type="nucleotide sequence ID" value="XM_503808.1"/>
</dbReference>
<dbReference type="SMR" id="Q6L8K7"/>
<dbReference type="STRING" id="284591.Q6L8K7"/>
<dbReference type="EnsemblFungi" id="CAG79399">
    <property type="protein sequence ID" value="CAG79399"/>
    <property type="gene ID" value="YALI0_E11099g"/>
</dbReference>
<dbReference type="KEGG" id="yli:2911520"/>
<dbReference type="VEuPathDB" id="FungiDB:YALI0_E11099g"/>
<dbReference type="HOGENOM" id="CLU_031026_0_0_1"/>
<dbReference type="InParanoid" id="Q6L8K7"/>
<dbReference type="OMA" id="EPMRPGT"/>
<dbReference type="OrthoDB" id="108700at4891"/>
<dbReference type="Proteomes" id="UP000001300">
    <property type="component" value="Chromosome E"/>
</dbReference>
<dbReference type="GO" id="GO:0005739">
    <property type="term" value="C:mitochondrion"/>
    <property type="evidence" value="ECO:0000318"/>
    <property type="project" value="GO_Central"/>
</dbReference>
<dbReference type="GO" id="GO:0005777">
    <property type="term" value="C:peroxisome"/>
    <property type="evidence" value="ECO:0007669"/>
    <property type="project" value="UniProtKB-SubCell"/>
</dbReference>
<dbReference type="GO" id="GO:0003985">
    <property type="term" value="F:acetyl-CoA C-acetyltransferase activity"/>
    <property type="evidence" value="ECO:0000318"/>
    <property type="project" value="GO_Central"/>
</dbReference>
<dbReference type="GO" id="GO:0046872">
    <property type="term" value="F:metal ion binding"/>
    <property type="evidence" value="ECO:0007669"/>
    <property type="project" value="UniProtKB-KW"/>
</dbReference>
<dbReference type="CDD" id="cd00751">
    <property type="entry name" value="thiolase"/>
    <property type="match status" value="1"/>
</dbReference>
<dbReference type="FunFam" id="3.40.47.10:FF:000007">
    <property type="entry name" value="acetyl-CoA acetyltransferase, mitochondrial"/>
    <property type="match status" value="1"/>
</dbReference>
<dbReference type="Gene3D" id="3.40.47.10">
    <property type="match status" value="2"/>
</dbReference>
<dbReference type="InterPro" id="IPR002155">
    <property type="entry name" value="Thiolase"/>
</dbReference>
<dbReference type="InterPro" id="IPR016039">
    <property type="entry name" value="Thiolase-like"/>
</dbReference>
<dbReference type="InterPro" id="IPR020615">
    <property type="entry name" value="Thiolase_acyl_enz_int_AS"/>
</dbReference>
<dbReference type="InterPro" id="IPR020617">
    <property type="entry name" value="Thiolase_C"/>
</dbReference>
<dbReference type="InterPro" id="IPR020613">
    <property type="entry name" value="Thiolase_CS"/>
</dbReference>
<dbReference type="InterPro" id="IPR020616">
    <property type="entry name" value="Thiolase_N"/>
</dbReference>
<dbReference type="NCBIfam" id="TIGR01930">
    <property type="entry name" value="AcCoA-C-Actrans"/>
    <property type="match status" value="1"/>
</dbReference>
<dbReference type="PANTHER" id="PTHR18919:SF156">
    <property type="entry name" value="ACETYL-COA ACETYLTRANSFERASE, MITOCHONDRIAL"/>
    <property type="match status" value="1"/>
</dbReference>
<dbReference type="PANTHER" id="PTHR18919">
    <property type="entry name" value="ACETYL-COA C-ACYLTRANSFERASE"/>
    <property type="match status" value="1"/>
</dbReference>
<dbReference type="Pfam" id="PF02803">
    <property type="entry name" value="Thiolase_C"/>
    <property type="match status" value="1"/>
</dbReference>
<dbReference type="Pfam" id="PF00108">
    <property type="entry name" value="Thiolase_N"/>
    <property type="match status" value="1"/>
</dbReference>
<dbReference type="PIRSF" id="PIRSF000429">
    <property type="entry name" value="Ac-CoA_Ac_transf"/>
    <property type="match status" value="1"/>
</dbReference>
<dbReference type="SUPFAM" id="SSF53901">
    <property type="entry name" value="Thiolase-like"/>
    <property type="match status" value="2"/>
</dbReference>
<dbReference type="PROSITE" id="PS00098">
    <property type="entry name" value="THIOLASE_1"/>
    <property type="match status" value="1"/>
</dbReference>
<dbReference type="PROSITE" id="PS00737">
    <property type="entry name" value="THIOLASE_2"/>
    <property type="match status" value="1"/>
</dbReference>
<gene>
    <name type="primary">PAT1</name>
    <name type="ordered locus">YALI0E11099g</name>
</gene>
<evidence type="ECO:0000250" key="1"/>
<evidence type="ECO:0000305" key="2"/>
<reference key="1">
    <citation type="journal article" date="2001" name="Biochem. Biophys. Res. Commun.">
        <title>Isolation and characterization of acetoacetyl-CoA thiolase gene essential for n-decane assimilation in yeast Yarrowia lipolytica.</title>
        <authorList>
            <person name="Yamagami S."/>
            <person name="Iida T."/>
            <person name="Nagata Y."/>
            <person name="Ohta A."/>
            <person name="Takagi M."/>
        </authorList>
    </citation>
    <scope>NUCLEOTIDE SEQUENCE [GENOMIC DNA]</scope>
    <source>
        <strain>CXAU1</strain>
    </source>
</reference>
<reference key="2">
    <citation type="journal article" date="2004" name="Nature">
        <title>Genome evolution in yeasts.</title>
        <authorList>
            <person name="Dujon B."/>
            <person name="Sherman D."/>
            <person name="Fischer G."/>
            <person name="Durrens P."/>
            <person name="Casaregola S."/>
            <person name="Lafontaine I."/>
            <person name="de Montigny J."/>
            <person name="Marck C."/>
            <person name="Neuveglise C."/>
            <person name="Talla E."/>
            <person name="Goffard N."/>
            <person name="Frangeul L."/>
            <person name="Aigle M."/>
            <person name="Anthouard V."/>
            <person name="Babour A."/>
            <person name="Barbe V."/>
            <person name="Barnay S."/>
            <person name="Blanchin S."/>
            <person name="Beckerich J.-M."/>
            <person name="Beyne E."/>
            <person name="Bleykasten C."/>
            <person name="Boisrame A."/>
            <person name="Boyer J."/>
            <person name="Cattolico L."/>
            <person name="Confanioleri F."/>
            <person name="de Daruvar A."/>
            <person name="Despons L."/>
            <person name="Fabre E."/>
            <person name="Fairhead C."/>
            <person name="Ferry-Dumazet H."/>
            <person name="Groppi A."/>
            <person name="Hantraye F."/>
            <person name="Hennequin C."/>
            <person name="Jauniaux N."/>
            <person name="Joyet P."/>
            <person name="Kachouri R."/>
            <person name="Kerrest A."/>
            <person name="Koszul R."/>
            <person name="Lemaire M."/>
            <person name="Lesur I."/>
            <person name="Ma L."/>
            <person name="Muller H."/>
            <person name="Nicaud J.-M."/>
            <person name="Nikolski M."/>
            <person name="Oztas S."/>
            <person name="Ozier-Kalogeropoulos O."/>
            <person name="Pellenz S."/>
            <person name="Potier S."/>
            <person name="Richard G.-F."/>
            <person name="Straub M.-L."/>
            <person name="Suleau A."/>
            <person name="Swennen D."/>
            <person name="Tekaia F."/>
            <person name="Wesolowski-Louvel M."/>
            <person name="Westhof E."/>
            <person name="Wirth B."/>
            <person name="Zeniou-Meyer M."/>
            <person name="Zivanovic Y."/>
            <person name="Bolotin-Fukuhara M."/>
            <person name="Thierry A."/>
            <person name="Bouchier C."/>
            <person name="Caudron B."/>
            <person name="Scarpelli C."/>
            <person name="Gaillardin C."/>
            <person name="Weissenbach J."/>
            <person name="Wincker P."/>
            <person name="Souciet J.-L."/>
        </authorList>
    </citation>
    <scope>NUCLEOTIDE SEQUENCE [LARGE SCALE GENOMIC DNA]</scope>
    <source>
        <strain>CLIB 122 / E 150</strain>
    </source>
</reference>
<protein>
    <recommendedName>
        <fullName>Acetyl-CoA acetyltransferase</fullName>
        <ecNumber>2.3.1.9</ecNumber>
    </recommendedName>
    <alternativeName>
        <fullName>Peroxisomal acetoacetyl-CoA thiolase</fullName>
        <shortName>Thiolase</shortName>
    </alternativeName>
</protein>
<comment type="function">
    <text>Essential for n-decane utilization.</text>
</comment>
<comment type="catalytic activity">
    <reaction>
        <text>2 acetyl-CoA = acetoacetyl-CoA + CoA</text>
        <dbReference type="Rhea" id="RHEA:21036"/>
        <dbReference type="ChEBI" id="CHEBI:57286"/>
        <dbReference type="ChEBI" id="CHEBI:57287"/>
        <dbReference type="ChEBI" id="CHEBI:57288"/>
        <dbReference type="EC" id="2.3.1.9"/>
    </reaction>
</comment>
<comment type="subcellular location">
    <subcellularLocation>
        <location>Peroxisome</location>
    </subcellularLocation>
</comment>
<comment type="similarity">
    <text evidence="2">Belongs to the thiolase-like superfamily. Thiolase family.</text>
</comment>
<feature type="chain" id="PRO_0000206415" description="Acetyl-CoA acetyltransferase">
    <location>
        <begin position="1"/>
        <end position="397"/>
    </location>
</feature>
<feature type="active site" description="Acyl-thioester intermediate" evidence="1">
    <location>
        <position position="95"/>
    </location>
</feature>
<feature type="active site" description="Proton acceptor" evidence="1">
    <location>
        <position position="351"/>
    </location>
</feature>
<feature type="active site" description="Proton acceptor" evidence="1">
    <location>
        <position position="379"/>
    </location>
</feature>
<feature type="binding site" evidence="1">
    <location>
        <position position="187"/>
    </location>
    <ligand>
        <name>CoA</name>
        <dbReference type="ChEBI" id="CHEBI:57287"/>
    </ligand>
</feature>
<feature type="binding site" evidence="1">
    <location>
        <position position="187"/>
    </location>
    <ligand>
        <name>K(+)</name>
        <dbReference type="ChEBI" id="CHEBI:29103"/>
    </ligand>
</feature>
<feature type="binding site" evidence="1">
    <location>
        <position position="230"/>
    </location>
    <ligand>
        <name>CoA</name>
        <dbReference type="ChEBI" id="CHEBI:57287"/>
    </ligand>
</feature>
<feature type="binding site" evidence="1">
    <location>
        <position position="246"/>
    </location>
    <ligand>
        <name>K(+)</name>
        <dbReference type="ChEBI" id="CHEBI:29103"/>
    </ligand>
</feature>
<feature type="binding site" evidence="1">
    <location>
        <position position="247"/>
    </location>
    <ligand>
        <name>K(+)</name>
        <dbReference type="ChEBI" id="CHEBI:29103"/>
    </ligand>
</feature>
<feature type="binding site" evidence="1">
    <location>
        <position position="249"/>
    </location>
    <ligand>
        <name>K(+)</name>
        <dbReference type="ChEBI" id="CHEBI:29103"/>
    </ligand>
</feature>
<feature type="binding site" evidence="1">
    <location>
        <position position="250"/>
    </location>
    <ligand>
        <name>CoA</name>
        <dbReference type="ChEBI" id="CHEBI:57287"/>
    </ligand>
</feature>
<feature type="binding site" evidence="1">
    <location>
        <position position="347"/>
    </location>
    <ligand>
        <name>K(+)</name>
        <dbReference type="ChEBI" id="CHEBI:29103"/>
    </ligand>
</feature>
<name>THIL_YARLI</name>
<keyword id="KW-0012">Acyltransferase</keyword>
<keyword id="KW-0479">Metal-binding</keyword>
<keyword id="KW-0576">Peroxisome</keyword>
<keyword id="KW-0630">Potassium</keyword>
<keyword id="KW-1185">Reference proteome</keyword>
<keyword id="KW-0808">Transferase</keyword>
<sequence>MRLTLPRLNAAYIVGAARTPVGKFNGALKSVSAIDLGITAAKAAVQRSKVPADQIDEFLFGQVLTANSGQAPARQVVIKGGFPESVEATTINKVCSSGLKTVALAAQAIKAGDRNVIVAGGMESMSNTPYYSGRGLVFGNQKLEDSIVKDGLWDPYNNIHMGNCCENTNKRDGITREQQDEYAIESYRRANESIKNGAFKDEIVPVEIKTRKGTVTVSEDEEPKGANAEKLKGLKPVFDKQGSVTAGNASPINDGASAVVVASGTKAKELGTPVLAKIVSYADAATAPIDFTIAPSLAIPAALKKAGLTKDDIALWEINEAFSGVALANLMRLGIDKSKVNVKGGAVALGHPIGASGNRIFVTLVNALKEGEYGVAAICNGGGASTAIVIKKVSSVE</sequence>
<organism>
    <name type="scientific">Yarrowia lipolytica (strain CLIB 122 / E 150)</name>
    <name type="common">Yeast</name>
    <name type="synonym">Candida lipolytica</name>
    <dbReference type="NCBI Taxonomy" id="284591"/>
    <lineage>
        <taxon>Eukaryota</taxon>
        <taxon>Fungi</taxon>
        <taxon>Dikarya</taxon>
        <taxon>Ascomycota</taxon>
        <taxon>Saccharomycotina</taxon>
        <taxon>Dipodascomycetes</taxon>
        <taxon>Dipodascales</taxon>
        <taxon>Dipodascales incertae sedis</taxon>
        <taxon>Yarrowia</taxon>
    </lineage>
</organism>
<proteinExistence type="inferred from homology"/>
<accession>Q6L8K7</accession>